<gene>
    <name type="primary">MDM4</name>
    <name type="synonym">MDMX</name>
</gene>
<proteinExistence type="evidence at protein level"/>
<organism>
    <name type="scientific">Homo sapiens</name>
    <name type="common">Human</name>
    <dbReference type="NCBI Taxonomy" id="9606"/>
    <lineage>
        <taxon>Eukaryota</taxon>
        <taxon>Metazoa</taxon>
        <taxon>Chordata</taxon>
        <taxon>Craniata</taxon>
        <taxon>Vertebrata</taxon>
        <taxon>Euteleostomi</taxon>
        <taxon>Mammalia</taxon>
        <taxon>Eutheria</taxon>
        <taxon>Euarchontoglires</taxon>
        <taxon>Primates</taxon>
        <taxon>Haplorrhini</taxon>
        <taxon>Catarrhini</taxon>
        <taxon>Hominidae</taxon>
        <taxon>Homo</taxon>
    </lineage>
</organism>
<feature type="chain" id="PRO_0000157336" description="Protein Mdm4">
    <location>
        <begin position="1"/>
        <end position="490"/>
    </location>
</feature>
<feature type="domain" description="SWIB/MDM2" evidence="4">
    <location>
        <begin position="25"/>
        <end position="108"/>
    </location>
</feature>
<feature type="zinc finger region" description="RanBP2-type" evidence="3">
    <location>
        <begin position="300"/>
        <end position="329"/>
    </location>
</feature>
<feature type="zinc finger region" description="RING-type" evidence="2">
    <location>
        <begin position="437"/>
        <end position="478"/>
    </location>
</feature>
<feature type="region of interest" description="Disordered" evidence="5">
    <location>
        <begin position="129"/>
        <end position="160"/>
    </location>
</feature>
<feature type="region of interest" description="Region II">
    <location>
        <begin position="246"/>
        <end position="332"/>
    </location>
</feature>
<feature type="region of interest" description="Necessary for interaction with USP2" evidence="10">
    <location>
        <begin position="393"/>
        <end position="490"/>
    </location>
</feature>
<feature type="short sequence motif" description="Nuclear localization signal" evidence="1">
    <location>
        <begin position="442"/>
        <end position="445"/>
    </location>
</feature>
<feature type="compositionally biased region" description="Polar residues" evidence="5">
    <location>
        <begin position="130"/>
        <end position="143"/>
    </location>
</feature>
<feature type="modified residue" description="Phosphoserine; by CHEK2" evidence="8 16">
    <location>
        <position position="342"/>
    </location>
</feature>
<feature type="modified residue" description="Phosphoserine; by CHEK1 and CHEK2" evidence="8 9 16">
    <location>
        <position position="367"/>
    </location>
</feature>
<feature type="splice variant" id="VSP_042563" description="In isoform HDMX211." evidence="14">
    <location>
        <begin position="27"/>
        <end position="352"/>
    </location>
</feature>
<feature type="splice variant" id="VSP_035669" description="In isoform 2." evidence="15">
    <original>LATATTDAAQTLALAQDHSMDIPSQDQLKQSAEESSTSRKRTTEDDIPTLPTSEHKCIHSREDEDLIENLAQDETSRLDLGFEEWDVAGLPWWFLGNLRSNYTPRSNGSTDLQTNQDVGTAIVSDTTDDLWFLNESVSEQLGVGIKVEAADTEQTSEEVGKVSDKKVIEVGKNDDLEDSKSLSDDTDVEVTSEDEWQCTECKKFNSPSKRYCFRCWALRKDWYSDCSKLTHSLSTSDITAIPEKENEGNDVPDCRRTISAPVVRPKDAYIKKENSKLFDPCNSVEFLDLAHSSESQETISSMGEQLDNLSEQRTDTENMEDCQNLLKPCSLCEKRPRDGNIIHGRTGHLVTCFHCARRLKKAGASCPICKKEIQLVIKVFIA</original>
    <variation>SASNNTARCNRILQSQKKN</variation>
    <location>
        <begin position="109"/>
        <end position="490"/>
    </location>
</feature>
<feature type="splice variant" id="VSP_035670" description="In isoform 3." evidence="15">
    <original>LATATTDAAQTLALAQDHSMDIPSQDQLKQSAEESSTSRKRTTEDDIPTLPTSEHKCIHSREDEDLIENLAQDETSRLDLGFEEWDVAGLPWWFLGNLRSNYTPRSNGSTDLQTNQDVGTAIVSDTTDDLWFLNESVSEQLGVGIKVEAADTEQTSEEVGKVSDKKVIEVGKNDDLEDSKSLSDDTDVEVTSEDEWQCTECKKFNSPSKRYCFRCWALRKDWYSDCSKLTHSLSTSDITAIPEKENEGNDVPDCRRTISAPVVRPKDAYIKKENSKLFDPCNSVEFLDLAHSSESQETISSMGEQLDNLSEQRTDTENMEDCQNLLKPCSLCEKRPRDGNIIHGRTGHLVTCFHCARRLKKAGASCPICKKEIQLVIKVFIA</original>
    <variation>SASNNTDAAQTLALAQDHT</variation>
    <location>
        <begin position="109"/>
        <end position="490"/>
    </location>
</feature>
<feature type="splice variant" id="VSP_043145" description="In isoform 5." evidence="13">
    <location>
        <begin position="225"/>
        <end position="274"/>
    </location>
</feature>
<feature type="sequence variant" id="VAR_017106" description="In dbSNP:rs4252716." evidence="12">
    <original>I</original>
    <variation>T</variation>
    <location>
        <position position="175"/>
    </location>
</feature>
<feature type="sequence variant" id="VAR_017107" description="In dbSNP:rs4252741." evidence="12">
    <original>T</original>
    <variation>I</variation>
    <location>
        <position position="406"/>
    </location>
</feature>
<feature type="sequence variant" id="VAR_084553" description="In BMFS6; altered capacity to interact with MDM2 RING domain in a yeast two-hybrid assay; no effect on ATP binding; expressed at lower levels than wild-type; when expressed in a mouse model, leads to increased TP53 activity, decreased telomerase length and ultimately to bone marrow failure; dbSNP:rs1270135772." evidence="11">
    <original>T</original>
    <variation>M</variation>
    <location>
        <position position="454"/>
    </location>
</feature>
<feature type="mutagenesis site" description="Fails to interact with MDM2." evidence="6">
    <original>C</original>
    <variation>G</variation>
    <location>
        <position position="437"/>
    </location>
</feature>
<feature type="sequence conflict" description="In Ref. 1; AAB62928." evidence="15" ref="1">
    <original>D</original>
    <variation>N</variation>
    <location>
        <position position="94"/>
    </location>
</feature>
<feature type="strand" evidence="20">
    <location>
        <begin position="27"/>
        <end position="29"/>
    </location>
</feature>
<feature type="helix" evidence="20">
    <location>
        <begin position="31"/>
        <end position="39"/>
    </location>
</feature>
<feature type="helix" evidence="20">
    <location>
        <begin position="49"/>
        <end position="62"/>
    </location>
</feature>
<feature type="strand" evidence="18">
    <location>
        <begin position="68"/>
        <end position="70"/>
    </location>
</feature>
<feature type="strand" evidence="20">
    <location>
        <begin position="73"/>
        <end position="75"/>
    </location>
</feature>
<feature type="strand" evidence="22">
    <location>
        <begin position="77"/>
        <end position="79"/>
    </location>
</feature>
<feature type="helix" evidence="20">
    <location>
        <begin position="80"/>
        <end position="85"/>
    </location>
</feature>
<feature type="strand" evidence="20">
    <location>
        <begin position="88"/>
        <end position="91"/>
    </location>
</feature>
<feature type="helix" evidence="20">
    <location>
        <begin position="96"/>
        <end position="105"/>
    </location>
</feature>
<feature type="strand" evidence="20">
    <location>
        <begin position="106"/>
        <end position="108"/>
    </location>
</feature>
<feature type="strand" evidence="17">
    <location>
        <begin position="307"/>
        <end position="309"/>
    </location>
</feature>
<feature type="turn" evidence="17">
    <location>
        <begin position="321"/>
        <end position="323"/>
    </location>
</feature>
<feature type="helix" evidence="21">
    <location>
        <begin position="343"/>
        <end position="345"/>
    </location>
</feature>
<feature type="helix" evidence="19">
    <location>
        <begin position="429"/>
        <end position="434"/>
    </location>
</feature>
<feature type="turn" evidence="19">
    <location>
        <begin position="438"/>
        <end position="440"/>
    </location>
</feature>
<feature type="strand" evidence="19">
    <location>
        <begin position="442"/>
        <end position="445"/>
    </location>
</feature>
<feature type="strand" evidence="19">
    <location>
        <begin position="447"/>
        <end position="451"/>
    </location>
</feature>
<feature type="strand" evidence="19">
    <location>
        <begin position="454"/>
        <end position="459"/>
    </location>
</feature>
<feature type="helix" evidence="19">
    <location>
        <begin position="461"/>
        <end position="469"/>
    </location>
</feature>
<feature type="turn" evidence="19">
    <location>
        <begin position="475"/>
        <end position="477"/>
    </location>
</feature>
<feature type="strand" evidence="19">
    <location>
        <begin position="483"/>
        <end position="489"/>
    </location>
</feature>
<sequence>MTSFSTSAQCSTSDSACRISPGQINQVRPKLPLLKILHAAGAQGEMFTVKEVMHYLGQYIMVKQLYDQQEQHMVYCGGDLLGELLGRQSFSVKDPSPLYDMLRKNLVTLATATTDAAQTLALAQDHSMDIPSQDQLKQSAEESSTSRKRTTEDDIPTLPTSEHKCIHSREDEDLIENLAQDETSRLDLGFEEWDVAGLPWWFLGNLRSNYTPRSNGSTDLQTNQDVGTAIVSDTTDDLWFLNESVSEQLGVGIKVEAADTEQTSEEVGKVSDKKVIEVGKNDDLEDSKSLSDDTDVEVTSEDEWQCTECKKFNSPSKRYCFRCWALRKDWYSDCSKLTHSLSTSDITAIPEKENEGNDVPDCRRTISAPVVRPKDAYIKKENSKLFDPCNSVEFLDLAHSSESQETISSMGEQLDNLSEQRTDTENMEDCQNLLKPCSLCEKRPRDGNIIHGRTGHLVTCFHCARRLKKAGASCPICKKEIQLVIKVFIA</sequence>
<keyword id="KW-0002">3D-structure</keyword>
<keyword id="KW-0025">Alternative splicing</keyword>
<keyword id="KW-0225">Disease variant</keyword>
<keyword id="KW-0479">Metal-binding</keyword>
<keyword id="KW-0539">Nucleus</keyword>
<keyword id="KW-0597">Phosphoprotein</keyword>
<keyword id="KW-1267">Proteomics identification</keyword>
<keyword id="KW-1185">Reference proteome</keyword>
<keyword id="KW-0832">Ubl conjugation</keyword>
<keyword id="KW-0862">Zinc</keyword>
<keyword id="KW-0863">Zinc-finger</keyword>
<comment type="function">
    <text evidence="8 9 11">Along with MDM2, contributes to TP53 regulation (PubMed:32300648). Inhibits p53/TP53- and TP73/p73-mediated cell cycle arrest and apoptosis by binding its transcriptional activation domain. Inhibits degradation of MDM2. Can reverse MDM2-targeted degradation of TP53 while maintaining suppression of TP53 transactivation and apoptotic functions.</text>
</comment>
<comment type="subunit">
    <text evidence="8 9 10 11">Interacts with MDM2 (PubMed:16163388, PubMed:19838211, PubMed:32300648). Interacts with TP53, TP73 and USP2. Found in a trimeric complex with USP2, MDM2 and MDM4. Interacts (phosphorylated) with YWHAG; negatively regulates MDM4 activity toward TP53.</text>
</comment>
<comment type="interaction">
    <interactant intactId="EBI-398437">
        <id>O15151</id>
    </interactant>
    <interactant intactId="EBI-8643161">
        <id>Q9NX04</id>
        <label>AIRIM</label>
    </interactant>
    <organismsDiffer>false</organismsDiffer>
    <experiments>3</experiments>
</comment>
<comment type="interaction">
    <interactant intactId="EBI-398437">
        <id>O15151</id>
    </interactant>
    <interactant intactId="EBI-77694">
        <id>P10415</id>
        <label>BCL2</label>
    </interactant>
    <organismsDiffer>false</organismsDiffer>
    <experiments>4</experiments>
</comment>
<comment type="interaction">
    <interactant intactId="EBI-398437">
        <id>O15151</id>
    </interactant>
    <interactant intactId="EBI-10213454">
        <id>Q7Z479</id>
        <label>CAPN7</label>
    </interactant>
    <organismsDiffer>false</organismsDiffer>
    <experiments>3</experiments>
</comment>
<comment type="interaction">
    <interactant intactId="EBI-398437">
        <id>O15151</id>
    </interactant>
    <interactant intactId="EBI-4314390">
        <id>O95971</id>
        <label>CD160</label>
    </interactant>
    <organismsDiffer>false</organismsDiffer>
    <experiments>6</experiments>
</comment>
<comment type="interaction">
    <interactant intactId="EBI-398437">
        <id>O15151</id>
    </interactant>
    <interactant intactId="EBI-1383726">
        <id>P48729</id>
        <label>CSNK1A1</label>
    </interactant>
    <organismsDiffer>false</organismsDiffer>
    <experiments>5</experiments>
</comment>
<comment type="interaction">
    <interactant intactId="EBI-398437">
        <id>O15151</id>
    </interactant>
    <interactant intactId="EBI-389668">
        <id>Q00987</id>
        <label>MDM2</label>
    </interactant>
    <organismsDiffer>false</organismsDiffer>
    <experiments>12</experiments>
</comment>
<comment type="interaction">
    <interactant intactId="EBI-398437">
        <id>O15151</id>
    </interactant>
    <interactant intactId="EBI-2340269">
        <id>Q13064</id>
        <label>MKRN3</label>
    </interactant>
    <organismsDiffer>false</organismsDiffer>
    <experiments>9</experiments>
</comment>
<comment type="interaction">
    <interactant intactId="EBI-398437">
        <id>O15151</id>
    </interactant>
    <interactant intactId="EBI-747693">
        <id>P41227</id>
        <label>NAA10</label>
    </interactant>
    <organismsDiffer>false</organismsDiffer>
    <experiments>3</experiments>
</comment>
<comment type="interaction">
    <interactant intactId="EBI-398437">
        <id>O15151</id>
    </interactant>
    <interactant intactId="EBI-491274">
        <id>P06400</id>
        <label>RB1</label>
    </interactant>
    <organismsDiffer>false</organismsDiffer>
    <experiments>4</experiments>
</comment>
<comment type="interaction">
    <interactant intactId="EBI-398437">
        <id>O15151</id>
    </interactant>
    <interactant intactId="EBI-2129242">
        <id>Q9Y4L5</id>
        <label>RNF115</label>
    </interactant>
    <organismsDiffer>false</organismsDiffer>
    <experiments>3</experiments>
</comment>
<comment type="interaction">
    <interactant intactId="EBI-398437">
        <id>O15151</id>
    </interactant>
    <interactant intactId="EBI-743686">
        <id>P23297</id>
        <label>S100A1</label>
    </interactant>
    <organismsDiffer>false</organismsDiffer>
    <experiments>2</experiments>
</comment>
<comment type="interaction">
    <interactant intactId="EBI-398437">
        <id>O15151</id>
    </interactant>
    <interactant intactId="EBI-752230">
        <id>P29034</id>
        <label>S100A2</label>
    </interactant>
    <organismsDiffer>false</organismsDiffer>
    <experiments>2</experiments>
</comment>
<comment type="interaction">
    <interactant intactId="EBI-398437">
        <id>O15151</id>
    </interactant>
    <interactant intactId="EBI-7211732">
        <id>P33763</id>
        <label>S100A5</label>
    </interactant>
    <organismsDiffer>false</organismsDiffer>
    <experiments>2</experiments>
</comment>
<comment type="interaction">
    <interactant intactId="EBI-398437">
        <id>O15151</id>
    </interactant>
    <interactant intactId="EBI-458391">
        <id>P04271</id>
        <label>S100B</label>
    </interactant>
    <organismsDiffer>false</organismsDiffer>
    <experiments>3</experiments>
</comment>
<comment type="interaction">
    <interactant intactId="EBI-398437">
        <id>O15151</id>
    </interactant>
    <interactant intactId="EBI-476295">
        <id>P31947</id>
        <label>SFN</label>
    </interactant>
    <organismsDiffer>false</organismsDiffer>
    <experiments>2</experiments>
</comment>
<comment type="interaction">
    <interactant intactId="EBI-398437">
        <id>O15151</id>
    </interactant>
    <interactant intactId="EBI-366083">
        <id>P04637</id>
        <label>TP53</label>
    </interactant>
    <organismsDiffer>false</organismsDiffer>
    <experiments>22</experiments>
</comment>
<comment type="interaction">
    <interactant intactId="EBI-398437">
        <id>O15151</id>
    </interactant>
    <interactant intactId="EBI-347677">
        <id>P62837</id>
        <label>UBE2D2</label>
    </interactant>
    <organismsDiffer>false</organismsDiffer>
    <experiments>2</experiments>
</comment>
<comment type="interaction">
    <interactant intactId="EBI-398437">
        <id>O15151</id>
    </interactant>
    <interactant intactId="EBI-302474">
        <id>Q93009</id>
        <label>USP7</label>
    </interactant>
    <organismsDiffer>false</organismsDiffer>
    <experiments>15</experiments>
</comment>
<comment type="interaction">
    <interactant intactId="EBI-398437">
        <id>O15151</id>
    </interactant>
    <interactant intactId="EBI-7207091">
        <id>O14972</id>
        <label>VPS26C</label>
    </interactant>
    <organismsDiffer>false</organismsDiffer>
    <experiments>3</experiments>
</comment>
<comment type="interaction">
    <interactant intactId="EBI-398437">
        <id>O15151</id>
    </interactant>
    <interactant intactId="EBI-540834">
        <id>P61964</id>
        <label>WDR5</label>
    </interactant>
    <organismsDiffer>false</organismsDiffer>
    <experiments>3</experiments>
</comment>
<comment type="interaction">
    <interactant intactId="EBI-398437">
        <id>O15151</id>
    </interactant>
    <interactant intactId="EBI-356498">
        <id>P62258</id>
        <label>YWHAE</label>
    </interactant>
    <organismsDiffer>false</organismsDiffer>
    <experiments>5</experiments>
</comment>
<comment type="interaction">
    <interactant intactId="EBI-398437">
        <id>O15151</id>
    </interactant>
    <interactant intactId="EBI-359832">
        <id>P61981</id>
        <label>YWHAG</label>
    </interactant>
    <organismsDiffer>false</organismsDiffer>
    <experiments>8</experiments>
</comment>
<comment type="interaction">
    <interactant intactId="EBI-398437">
        <id>O15151</id>
    </interactant>
    <interactant intactId="EBI-347088">
        <id>P63104</id>
        <label>YWHAZ</label>
    </interactant>
    <organismsDiffer>false</organismsDiffer>
    <experiments>2</experiments>
</comment>
<comment type="interaction">
    <interactant intactId="EBI-398437">
        <id>O15151</id>
    </interactant>
    <interactant intactId="EBI-1965777">
        <id>Q9BRR0</id>
        <label>ZKSCAN3</label>
    </interactant>
    <organismsDiffer>false</organismsDiffer>
    <experiments>3</experiments>
</comment>
<comment type="interaction">
    <interactant intactId="EBI-398437">
        <id>O15151</id>
    </interactant>
    <interactant intactId="EBI-16431094">
        <id>A0A0S2Z6X0</id>
        <label>ZKSCAN4</label>
    </interactant>
    <organismsDiffer>false</organismsDiffer>
    <experiments>3</experiments>
</comment>
<comment type="interaction">
    <interactant intactId="EBI-398437">
        <id>O15151</id>
    </interactant>
    <interactant intactId="EBI-7852331">
        <id>Q3YBA8</id>
    </interactant>
    <organismsDiffer>false</organismsDiffer>
    <experiments>6</experiments>
</comment>
<comment type="interaction">
    <interactant intactId="EBI-398437">
        <id>O15151</id>
    </interactant>
    <interactant intactId="EBI-6859460">
        <id>P03255-2</id>
    </interactant>
    <organismsDiffer>true</organismsDiffer>
    <experiments>3</experiments>
</comment>
<comment type="subcellular location">
    <subcellularLocation>
        <location>Nucleus</location>
    </subcellularLocation>
</comment>
<comment type="alternative products">
    <event type="alternative splicing"/>
    <isoform>
        <id>O15151-1</id>
        <name>1</name>
        <sequence type="displayed"/>
    </isoform>
    <isoform>
        <id>O15151-2</id>
        <name>2</name>
        <name>MDMX-S</name>
        <sequence type="described" ref="VSP_035669"/>
    </isoform>
    <isoform>
        <id>O15151-3</id>
        <name>3</name>
        <name>MDMX</name>
        <sequence type="described" ref="VSP_035670"/>
    </isoform>
    <isoform>
        <id>O15151-4</id>
        <name>HDMX211</name>
        <sequence type="described" ref="VSP_042563"/>
    </isoform>
    <isoform>
        <id>O15151-5</id>
        <name>5</name>
        <sequence type="described" ref="VSP_043145"/>
    </isoform>
    <text>Additional isoforms seem to exist.</text>
</comment>
<comment type="tissue specificity">
    <text>Expressed in all tissues tested with high levels in thymus.</text>
</comment>
<comment type="induction">
    <text evidence="10">Down-regulated by cisplatin (at protein level).</text>
</comment>
<comment type="domain">
    <text>Region I is sufficient for binding TP53 and inhibiting its G1 arrest and apoptosis functions. It also binds TP73. Region II contains most of a central acidic region and a putative C4-type zinc finger. The RING finger domain which coordinates two molecules of zinc mediates the heterooligomerization with MDM2.</text>
</comment>
<comment type="PTM">
    <text evidence="8 9 10">Phosphorylated. Phosphorylation at Ser-367 promotes interaction with YWHAG and subsequent ubiquitination and degradation. Phosphorylation at Ser-342 also induces ubiquitination and degradation but to a lower extent.</text>
</comment>
<comment type="PTM">
    <text evidence="10">Ubiquitinated and degraded by MDM2. Deubiquitination by USP2 on the other hand stabilizes the MDM4 protein.</text>
</comment>
<comment type="mass spectrometry"/>
<comment type="disease" evidence="11">
    <disease id="DI-05796">
        <name>Bone marrow failure syndrome 6</name>
        <acronym>BMFS6</acronym>
        <description>A form of bone marrow failure syndrome, a heterogeneous group of life-threatening disorders characterized by hematopoietic defects in association with a range of variable extra-hematopoietic manifestations. BMFS6 is an autosomal dominant form characterized by intermittent neutropenia, lymphopenia, or anemia associated with hypocellular bone marrow, and increased susceptibility to cancer.</description>
        <dbReference type="MIM" id="618849"/>
    </disease>
    <text>The disease is caused by variants affecting the gene represented in this entry.</text>
</comment>
<comment type="miscellaneous">
    <molecule>Isoform HDMX211</molecule>
    <text evidence="15">Cancer-specific isoform, may counteract MDM2/MDM4-mediated p53 degradation.</text>
</comment>
<comment type="similarity">
    <text evidence="15">Belongs to the MDM2/MDM4 family.</text>
</comment>
<evidence type="ECO:0000255" key="1"/>
<evidence type="ECO:0000255" key="2">
    <source>
        <dbReference type="PROSITE-ProRule" id="PRU00175"/>
    </source>
</evidence>
<evidence type="ECO:0000255" key="3">
    <source>
        <dbReference type="PROSITE-ProRule" id="PRU00322"/>
    </source>
</evidence>
<evidence type="ECO:0000255" key="4">
    <source>
        <dbReference type="PROSITE-ProRule" id="PRU01273"/>
    </source>
</evidence>
<evidence type="ECO:0000256" key="5">
    <source>
        <dbReference type="SAM" id="MobiDB-lite"/>
    </source>
</evidence>
<evidence type="ECO:0000269" key="6">
    <source>
    </source>
</evidence>
<evidence type="ECO:0000269" key="7">
    <source>
    </source>
</evidence>
<evidence type="ECO:0000269" key="8">
    <source>
    </source>
</evidence>
<evidence type="ECO:0000269" key="9">
    <source>
    </source>
</evidence>
<evidence type="ECO:0000269" key="10">
    <source>
    </source>
</evidence>
<evidence type="ECO:0000269" key="11">
    <source>
    </source>
</evidence>
<evidence type="ECO:0000269" key="12">
    <source ref="4"/>
</evidence>
<evidence type="ECO:0000303" key="13">
    <source>
    </source>
</evidence>
<evidence type="ECO:0000303" key="14">
    <source>
    </source>
</evidence>
<evidence type="ECO:0000305" key="15"/>
<evidence type="ECO:0007744" key="16">
    <source>
    </source>
</evidence>
<evidence type="ECO:0007829" key="17">
    <source>
        <dbReference type="PDB" id="2CR8"/>
    </source>
</evidence>
<evidence type="ECO:0007829" key="18">
    <source>
        <dbReference type="PDB" id="4RXZ"/>
    </source>
</evidence>
<evidence type="ECO:0007829" key="19">
    <source>
        <dbReference type="PDB" id="5MNJ"/>
    </source>
</evidence>
<evidence type="ECO:0007829" key="20">
    <source>
        <dbReference type="PDB" id="6Q9Y"/>
    </source>
</evidence>
<evidence type="ECO:0007829" key="21">
    <source>
        <dbReference type="PDB" id="6YR7"/>
    </source>
</evidence>
<evidence type="ECO:0007829" key="22">
    <source>
        <dbReference type="PDB" id="7KJN"/>
    </source>
</evidence>
<accession>O15151</accession>
<accession>Q2M2Y2</accession>
<accession>Q32SL2</accession>
<accession>Q6GS18</accession>
<accession>Q8IV83</accession>
<dbReference type="EMBL" id="AF007111">
    <property type="protein sequence ID" value="AAB62928.1"/>
    <property type="molecule type" value="mRNA"/>
</dbReference>
<dbReference type="EMBL" id="AY923176">
    <property type="protein sequence ID" value="AAY22054.1"/>
    <property type="molecule type" value="mRNA"/>
</dbReference>
<dbReference type="EMBL" id="AK223228">
    <property type="protein sequence ID" value="BAD96948.1"/>
    <property type="molecule type" value="mRNA"/>
</dbReference>
<dbReference type="EMBL" id="AY207458">
    <property type="protein sequence ID" value="AAO13494.1"/>
    <property type="molecule type" value="Genomic_DNA"/>
</dbReference>
<dbReference type="EMBL" id="AL512306">
    <property type="status" value="NOT_ANNOTATED_CDS"/>
    <property type="molecule type" value="Genomic_DNA"/>
</dbReference>
<dbReference type="EMBL" id="BC067299">
    <property type="protein sequence ID" value="AAH67299.1"/>
    <property type="molecule type" value="mRNA"/>
</dbReference>
<dbReference type="EMBL" id="BC105106">
    <property type="protein sequence ID" value="AAI05107.1"/>
    <property type="molecule type" value="mRNA"/>
</dbReference>
<dbReference type="CCDS" id="CCDS1447.1">
    <molecule id="O15151-1"/>
</dbReference>
<dbReference type="CCDS" id="CCDS55674.1">
    <molecule id="O15151-5"/>
</dbReference>
<dbReference type="CCDS" id="CCDS55675.1">
    <molecule id="O15151-4"/>
</dbReference>
<dbReference type="RefSeq" id="NP_001191100.1">
    <molecule id="O15151-5"/>
    <property type="nucleotide sequence ID" value="NM_001204171.2"/>
</dbReference>
<dbReference type="RefSeq" id="NP_001191101.1">
    <molecule id="O15151-4"/>
    <property type="nucleotide sequence ID" value="NM_001204172.2"/>
</dbReference>
<dbReference type="RefSeq" id="NP_001265445.1">
    <property type="nucleotide sequence ID" value="NM_001278516.1"/>
</dbReference>
<dbReference type="RefSeq" id="NP_001265446.1">
    <property type="nucleotide sequence ID" value="NM_001278517.1"/>
</dbReference>
<dbReference type="RefSeq" id="NP_001265447.1">
    <property type="nucleotide sequence ID" value="NM_001278518.1"/>
</dbReference>
<dbReference type="RefSeq" id="NP_001265448.1">
    <property type="nucleotide sequence ID" value="NM_001278519.1"/>
</dbReference>
<dbReference type="RefSeq" id="NP_002384.2">
    <molecule id="O15151-1"/>
    <property type="nucleotide sequence ID" value="NM_002393.5"/>
</dbReference>
<dbReference type="RefSeq" id="XP_024302882.1">
    <molecule id="O15151-1"/>
    <property type="nucleotide sequence ID" value="XM_024447114.2"/>
</dbReference>
<dbReference type="RefSeq" id="XP_024302883.1">
    <molecule id="O15151-1"/>
    <property type="nucleotide sequence ID" value="XM_024447115.2"/>
</dbReference>
<dbReference type="RefSeq" id="XP_047276907.1">
    <molecule id="O15151-5"/>
    <property type="nucleotide sequence ID" value="XM_047420951.1"/>
</dbReference>
<dbReference type="PDB" id="2CR8">
    <property type="method" value="NMR"/>
    <property type="chains" value="A=300-339"/>
</dbReference>
<dbReference type="PDB" id="2MWY">
    <property type="method" value="NMR"/>
    <property type="chains" value="A=23-111"/>
</dbReference>
<dbReference type="PDB" id="2N06">
    <property type="method" value="NMR"/>
    <property type="chains" value="A=23-111"/>
</dbReference>
<dbReference type="PDB" id="2N0U">
    <property type="method" value="NMR"/>
    <property type="chains" value="A=23-111"/>
</dbReference>
<dbReference type="PDB" id="2N0W">
    <property type="method" value="NMR"/>
    <property type="chains" value="A=23-111"/>
</dbReference>
<dbReference type="PDB" id="2N14">
    <property type="method" value="NMR"/>
    <property type="chains" value="A=23-111"/>
</dbReference>
<dbReference type="PDB" id="2VJE">
    <property type="method" value="X-ray"/>
    <property type="resolution" value="2.20 A"/>
    <property type="chains" value="B/D=428-490"/>
</dbReference>
<dbReference type="PDB" id="2VJF">
    <property type="method" value="X-ray"/>
    <property type="resolution" value="2.30 A"/>
    <property type="chains" value="B/D=428-490"/>
</dbReference>
<dbReference type="PDB" id="2VYR">
    <property type="method" value="X-ray"/>
    <property type="resolution" value="2.00 A"/>
    <property type="chains" value="A/B/C/D=16-116"/>
</dbReference>
<dbReference type="PDB" id="3DAB">
    <property type="method" value="X-ray"/>
    <property type="resolution" value="1.90 A"/>
    <property type="chains" value="A/C/E/G=23-111"/>
</dbReference>
<dbReference type="PDB" id="3EQY">
    <property type="method" value="X-ray"/>
    <property type="resolution" value="1.63 A"/>
    <property type="chains" value="A/B=24-108"/>
</dbReference>
<dbReference type="PDB" id="3FDO">
    <property type="method" value="X-ray"/>
    <property type="resolution" value="1.40 A"/>
    <property type="chains" value="A=23-111"/>
</dbReference>
<dbReference type="PDB" id="3FE7">
    <property type="method" value="X-ray"/>
    <property type="resolution" value="1.35 A"/>
    <property type="chains" value="A=14-111"/>
</dbReference>
<dbReference type="PDB" id="3FEA">
    <property type="method" value="X-ray"/>
    <property type="resolution" value="1.33 A"/>
    <property type="chains" value="A=14-111"/>
</dbReference>
<dbReference type="PDB" id="3JZO">
    <property type="method" value="X-ray"/>
    <property type="resolution" value="1.80 A"/>
    <property type="chains" value="A=23-111"/>
</dbReference>
<dbReference type="PDB" id="3JZP">
    <property type="method" value="X-ray"/>
    <property type="resolution" value="1.74 A"/>
    <property type="chains" value="A=23-111"/>
</dbReference>
<dbReference type="PDB" id="3JZQ">
    <property type="method" value="X-ray"/>
    <property type="resolution" value="1.80 A"/>
    <property type="chains" value="A/B=23-111"/>
</dbReference>
<dbReference type="PDB" id="3LBJ">
    <property type="method" value="X-ray"/>
    <property type="resolution" value="1.50 A"/>
    <property type="chains" value="E=23-111"/>
</dbReference>
<dbReference type="PDB" id="3MQR">
    <property type="method" value="X-ray"/>
    <property type="resolution" value="1.80 A"/>
    <property type="chains" value="B=395-404"/>
</dbReference>
<dbReference type="PDB" id="3U15">
    <property type="method" value="X-ray"/>
    <property type="resolution" value="1.80 A"/>
    <property type="chains" value="A/B/C/D=14-111"/>
</dbReference>
<dbReference type="PDB" id="4RXZ">
    <property type="method" value="X-ray"/>
    <property type="resolution" value="1.55 A"/>
    <property type="chains" value="A/B=24-108"/>
</dbReference>
<dbReference type="PDB" id="5MNJ">
    <property type="method" value="X-ray"/>
    <property type="resolution" value="2.16 A"/>
    <property type="chains" value="D/H=427-490"/>
</dbReference>
<dbReference type="PDB" id="5UML">
    <property type="method" value="X-ray"/>
    <property type="resolution" value="3.00 A"/>
    <property type="chains" value="A/B/E/G=24-108"/>
</dbReference>
<dbReference type="PDB" id="5VK1">
    <property type="method" value="X-ray"/>
    <property type="resolution" value="2.69 A"/>
    <property type="chains" value="A/C/E/G/I/K/M/O=24-108"/>
</dbReference>
<dbReference type="PDB" id="6Q9Q">
    <property type="method" value="X-ray"/>
    <property type="resolution" value="2.10 A"/>
    <property type="chains" value="A/B/C/D=14-111"/>
</dbReference>
<dbReference type="PDB" id="6Q9S">
    <property type="method" value="X-ray"/>
    <property type="resolution" value="2.40 A"/>
    <property type="chains" value="A/B/C=14-111"/>
</dbReference>
<dbReference type="PDB" id="6Q9U">
    <property type="method" value="X-ray"/>
    <property type="resolution" value="2.40 A"/>
    <property type="chains" value="A=14-111"/>
</dbReference>
<dbReference type="PDB" id="6Q9W">
    <property type="method" value="X-ray"/>
    <property type="resolution" value="1.55 A"/>
    <property type="chains" value="A/B=14-111"/>
</dbReference>
<dbReference type="PDB" id="6Q9Y">
    <property type="method" value="X-ray"/>
    <property type="resolution" value="1.20 A"/>
    <property type="chains" value="A/B=14-111"/>
</dbReference>
<dbReference type="PDB" id="6YR5">
    <property type="method" value="X-ray"/>
    <property type="resolution" value="2.25 A"/>
    <property type="chains" value="O/P/Q/R=361-374"/>
</dbReference>
<dbReference type="PDB" id="6YR7">
    <property type="method" value="X-ray"/>
    <property type="resolution" value="2.10 A"/>
    <property type="chains" value="C/Q=335-374"/>
</dbReference>
<dbReference type="PDB" id="7C3Q">
    <property type="method" value="X-ray"/>
    <property type="resolution" value="1.80 A"/>
    <property type="chains" value="A=23-108"/>
</dbReference>
<dbReference type="PDB" id="7C3Y">
    <property type="method" value="X-ray"/>
    <property type="resolution" value="1.63 A"/>
    <property type="chains" value="A=23-108"/>
</dbReference>
<dbReference type="PDB" id="7C44">
    <property type="method" value="X-ray"/>
    <property type="resolution" value="1.65 A"/>
    <property type="chains" value="A=23-108"/>
</dbReference>
<dbReference type="PDB" id="7EL4">
    <property type="method" value="X-ray"/>
    <property type="resolution" value="2.11 A"/>
    <property type="chains" value="A=23-111"/>
</dbReference>
<dbReference type="PDB" id="7KJN">
    <property type="method" value="X-ray"/>
    <property type="resolution" value="2.80 A"/>
    <property type="chains" value="A=24-108"/>
</dbReference>
<dbReference type="PDB" id="7MLA">
    <property type="method" value="NMR"/>
    <property type="chains" value="A=428-490"/>
</dbReference>
<dbReference type="PDB" id="8HDG">
    <property type="method" value="X-ray"/>
    <property type="resolution" value="1.73 A"/>
    <property type="chains" value="A/B/C/D=23-111"/>
</dbReference>
<dbReference type="PDB" id="8IA5">
    <property type="method" value="X-ray"/>
    <property type="resolution" value="1.93 A"/>
    <property type="chains" value="A=23-111"/>
</dbReference>
<dbReference type="PDBsum" id="2CR8"/>
<dbReference type="PDBsum" id="2MWY"/>
<dbReference type="PDBsum" id="2N06"/>
<dbReference type="PDBsum" id="2N0U"/>
<dbReference type="PDBsum" id="2N0W"/>
<dbReference type="PDBsum" id="2N14"/>
<dbReference type="PDBsum" id="2VJE"/>
<dbReference type="PDBsum" id="2VJF"/>
<dbReference type="PDBsum" id="2VYR"/>
<dbReference type="PDBsum" id="3DAB"/>
<dbReference type="PDBsum" id="3EQY"/>
<dbReference type="PDBsum" id="3FDO"/>
<dbReference type="PDBsum" id="3FE7"/>
<dbReference type="PDBsum" id="3FEA"/>
<dbReference type="PDBsum" id="3JZO"/>
<dbReference type="PDBsum" id="3JZP"/>
<dbReference type="PDBsum" id="3JZQ"/>
<dbReference type="PDBsum" id="3LBJ"/>
<dbReference type="PDBsum" id="3MQR"/>
<dbReference type="PDBsum" id="3U15"/>
<dbReference type="PDBsum" id="4RXZ"/>
<dbReference type="PDBsum" id="5MNJ"/>
<dbReference type="PDBsum" id="5UML"/>
<dbReference type="PDBsum" id="5VK1"/>
<dbReference type="PDBsum" id="6Q9Q"/>
<dbReference type="PDBsum" id="6Q9S"/>
<dbReference type="PDBsum" id="6Q9U"/>
<dbReference type="PDBsum" id="6Q9W"/>
<dbReference type="PDBsum" id="6Q9Y"/>
<dbReference type="PDBsum" id="6YR5"/>
<dbReference type="PDBsum" id="6YR7"/>
<dbReference type="PDBsum" id="7C3Q"/>
<dbReference type="PDBsum" id="7C3Y"/>
<dbReference type="PDBsum" id="7C44"/>
<dbReference type="PDBsum" id="7EL4"/>
<dbReference type="PDBsum" id="7KJN"/>
<dbReference type="PDBsum" id="7MLA"/>
<dbReference type="PDBsum" id="8HDG"/>
<dbReference type="PDBsum" id="8IA5"/>
<dbReference type="BMRB" id="O15151"/>
<dbReference type="SMR" id="O15151"/>
<dbReference type="BioGRID" id="110359">
    <property type="interactions" value="107"/>
</dbReference>
<dbReference type="ComplexPortal" id="CPX-6093">
    <property type="entry name" value="p53-MDM2-MDM4 transcriptional regulation complex"/>
</dbReference>
<dbReference type="ComplexPortal" id="CPX-663">
    <property type="entry name" value="p53-MDM4 transcriptional regulation complex"/>
</dbReference>
<dbReference type="CORUM" id="O15151"/>
<dbReference type="DIP" id="DIP-24199N"/>
<dbReference type="FunCoup" id="O15151">
    <property type="interactions" value="2523"/>
</dbReference>
<dbReference type="IntAct" id="O15151">
    <property type="interactions" value="54"/>
</dbReference>
<dbReference type="MINT" id="O15151"/>
<dbReference type="STRING" id="9606.ENSP00000356150"/>
<dbReference type="BindingDB" id="O15151"/>
<dbReference type="ChEMBL" id="CHEMBL1255126"/>
<dbReference type="MoonDB" id="O15151">
    <property type="type" value="Predicted"/>
</dbReference>
<dbReference type="iPTMnet" id="O15151"/>
<dbReference type="PhosphoSitePlus" id="O15151"/>
<dbReference type="BioMuta" id="MDM4"/>
<dbReference type="jPOST" id="O15151"/>
<dbReference type="MassIVE" id="O15151"/>
<dbReference type="PaxDb" id="9606-ENSP00000356150"/>
<dbReference type="PeptideAtlas" id="O15151"/>
<dbReference type="ProteomicsDB" id="48474">
    <molecule id="O15151-1"/>
</dbReference>
<dbReference type="ProteomicsDB" id="48475">
    <molecule id="O15151-2"/>
</dbReference>
<dbReference type="ProteomicsDB" id="48477">
    <molecule id="O15151-4"/>
</dbReference>
<dbReference type="ProteomicsDB" id="48478">
    <molecule id="O15151-5"/>
</dbReference>
<dbReference type="ABCD" id="O15151">
    <property type="antibodies" value="1 sequenced antibody"/>
</dbReference>
<dbReference type="Antibodypedia" id="20673">
    <property type="antibodies" value="774 antibodies from 38 providers"/>
</dbReference>
<dbReference type="DNASU" id="4194"/>
<dbReference type="Ensembl" id="ENST00000367182.8">
    <molecule id="O15151-1"/>
    <property type="protein sequence ID" value="ENSP00000356150.3"/>
    <property type="gene ID" value="ENSG00000198625.14"/>
</dbReference>
<dbReference type="Ensembl" id="ENST00000367183.7">
    <molecule id="O15151-4"/>
    <property type="protein sequence ID" value="ENSP00000356151.3"/>
    <property type="gene ID" value="ENSG00000198625.14"/>
</dbReference>
<dbReference type="Ensembl" id="ENST00000454264.6">
    <molecule id="O15151-5"/>
    <property type="protein sequence ID" value="ENSP00000396840.2"/>
    <property type="gene ID" value="ENSG00000198625.14"/>
</dbReference>
<dbReference type="GeneID" id="4194"/>
<dbReference type="KEGG" id="hsa:4194"/>
<dbReference type="MANE-Select" id="ENST00000367182.8">
    <property type="protein sequence ID" value="ENSP00000356150.3"/>
    <property type="RefSeq nucleotide sequence ID" value="NM_002393.5"/>
    <property type="RefSeq protein sequence ID" value="NP_002384.2"/>
</dbReference>
<dbReference type="UCSC" id="uc001hay.3">
    <molecule id="O15151-1"/>
    <property type="organism name" value="human"/>
</dbReference>
<dbReference type="AGR" id="HGNC:6974"/>
<dbReference type="CTD" id="4194"/>
<dbReference type="DisGeNET" id="4194"/>
<dbReference type="GeneCards" id="MDM4"/>
<dbReference type="HGNC" id="HGNC:6974">
    <property type="gene designation" value="MDM4"/>
</dbReference>
<dbReference type="HPA" id="ENSG00000198625">
    <property type="expression patterns" value="Low tissue specificity"/>
</dbReference>
<dbReference type="MalaCards" id="MDM4"/>
<dbReference type="MIM" id="602704">
    <property type="type" value="gene"/>
</dbReference>
<dbReference type="MIM" id="618849">
    <property type="type" value="phenotype"/>
</dbReference>
<dbReference type="neXtProt" id="NX_O15151"/>
<dbReference type="OpenTargets" id="ENSG00000198625"/>
<dbReference type="PharmGKB" id="PA30719"/>
<dbReference type="VEuPathDB" id="HostDB:ENSG00000198625"/>
<dbReference type="eggNOG" id="ENOG502QQNV">
    <property type="taxonomic scope" value="Eukaryota"/>
</dbReference>
<dbReference type="GeneTree" id="ENSGT00530000063539"/>
<dbReference type="HOGENOM" id="CLU_1618400_0_0_1"/>
<dbReference type="InParanoid" id="O15151"/>
<dbReference type="OMA" id="IPDCRRT"/>
<dbReference type="OrthoDB" id="24526at2759"/>
<dbReference type="PAN-GO" id="O15151">
    <property type="GO annotations" value="3 GO annotations based on evolutionary models"/>
</dbReference>
<dbReference type="PhylomeDB" id="O15151"/>
<dbReference type="TreeFam" id="TF105306"/>
<dbReference type="PathwayCommons" id="O15151"/>
<dbReference type="Reactome" id="R-HSA-2559580">
    <property type="pathway name" value="Oxidative Stress Induced Senescence"/>
</dbReference>
<dbReference type="Reactome" id="R-HSA-2559585">
    <property type="pathway name" value="Oncogene Induced Senescence"/>
</dbReference>
<dbReference type="Reactome" id="R-HSA-5689880">
    <property type="pathway name" value="Ub-specific processing proteases"/>
</dbReference>
<dbReference type="Reactome" id="R-HSA-6804756">
    <property type="pathway name" value="Regulation of TP53 Activity through Phosphorylation"/>
</dbReference>
<dbReference type="Reactome" id="R-HSA-6804757">
    <property type="pathway name" value="Regulation of TP53 Degradation"/>
</dbReference>
<dbReference type="Reactome" id="R-HSA-6804760">
    <property type="pathway name" value="Regulation of TP53 Activity through Methylation"/>
</dbReference>
<dbReference type="Reactome" id="R-HSA-69541">
    <property type="pathway name" value="Stabilization of p53"/>
</dbReference>
<dbReference type="SignaLink" id="O15151"/>
<dbReference type="SIGNOR" id="O15151"/>
<dbReference type="BioGRID-ORCS" id="4194">
    <property type="hits" value="95 hits in 1224 CRISPR screens"/>
</dbReference>
<dbReference type="ChiTaRS" id="MDM4">
    <property type="organism name" value="human"/>
</dbReference>
<dbReference type="EvolutionaryTrace" id="O15151"/>
<dbReference type="GeneWiki" id="MDM4"/>
<dbReference type="GenomeRNAi" id="4194"/>
<dbReference type="Pharos" id="O15151">
    <property type="development level" value="Tchem"/>
</dbReference>
<dbReference type="PRO" id="PR:O15151"/>
<dbReference type="Proteomes" id="UP000005640">
    <property type="component" value="Chromosome 1"/>
</dbReference>
<dbReference type="RNAct" id="O15151">
    <property type="molecule type" value="protein"/>
</dbReference>
<dbReference type="Bgee" id="ENSG00000198625">
    <property type="expression patterns" value="Expressed in nipple and 196 other cell types or tissues"/>
</dbReference>
<dbReference type="ExpressionAtlas" id="O15151">
    <property type="expression patterns" value="baseline and differential"/>
</dbReference>
<dbReference type="GO" id="GO:0005654">
    <property type="term" value="C:nucleoplasm"/>
    <property type="evidence" value="ECO:0000314"/>
    <property type="project" value="HPA"/>
</dbReference>
<dbReference type="GO" id="GO:0005634">
    <property type="term" value="C:nucleus"/>
    <property type="evidence" value="ECO:0000303"/>
    <property type="project" value="UniProtKB"/>
</dbReference>
<dbReference type="GO" id="GO:0017053">
    <property type="term" value="C:transcription repressor complex"/>
    <property type="evidence" value="ECO:0000353"/>
    <property type="project" value="ComplexPortal"/>
</dbReference>
<dbReference type="GO" id="GO:0019899">
    <property type="term" value="F:enzyme binding"/>
    <property type="evidence" value="ECO:0000353"/>
    <property type="project" value="UniProtKB"/>
</dbReference>
<dbReference type="GO" id="GO:0004842">
    <property type="term" value="F:ubiquitin-protein transferase activity"/>
    <property type="evidence" value="ECO:0000318"/>
    <property type="project" value="GO_Central"/>
</dbReference>
<dbReference type="GO" id="GO:0008270">
    <property type="term" value="F:zinc ion binding"/>
    <property type="evidence" value="ECO:0000304"/>
    <property type="project" value="UniProtKB"/>
</dbReference>
<dbReference type="GO" id="GO:0003283">
    <property type="term" value="P:atrial septum development"/>
    <property type="evidence" value="ECO:0000250"/>
    <property type="project" value="BHF-UCL"/>
</dbReference>
<dbReference type="GO" id="GO:0003181">
    <property type="term" value="P:atrioventricular valve morphogenesis"/>
    <property type="evidence" value="ECO:0000250"/>
    <property type="project" value="BHF-UCL"/>
</dbReference>
<dbReference type="GO" id="GO:0071456">
    <property type="term" value="P:cellular response to hypoxia"/>
    <property type="evidence" value="ECO:0000270"/>
    <property type="project" value="UniProtKB"/>
</dbReference>
<dbReference type="GO" id="GO:0030330">
    <property type="term" value="P:DNA damage response, signal transduction by p53 class mediator"/>
    <property type="evidence" value="ECO:0000270"/>
    <property type="project" value="UniProtKB"/>
</dbReference>
<dbReference type="GO" id="GO:0003203">
    <property type="term" value="P:endocardial cushion morphogenesis"/>
    <property type="evidence" value="ECO:0000250"/>
    <property type="project" value="BHF-UCL"/>
</dbReference>
<dbReference type="GO" id="GO:0003170">
    <property type="term" value="P:heart valve development"/>
    <property type="evidence" value="ECO:0000250"/>
    <property type="project" value="BHF-UCL"/>
</dbReference>
<dbReference type="GO" id="GO:0043066">
    <property type="term" value="P:negative regulation of apoptotic process"/>
    <property type="evidence" value="ECO:0007669"/>
    <property type="project" value="InterPro"/>
</dbReference>
<dbReference type="GO" id="GO:0008285">
    <property type="term" value="P:negative regulation of cell population proliferation"/>
    <property type="evidence" value="ECO:0000304"/>
    <property type="project" value="ProtInc"/>
</dbReference>
<dbReference type="GO" id="GO:0045892">
    <property type="term" value="P:negative regulation of DNA-templated transcription"/>
    <property type="evidence" value="ECO:0000314"/>
    <property type="project" value="ComplexPortal"/>
</dbReference>
<dbReference type="GO" id="GO:0042177">
    <property type="term" value="P:negative regulation of protein catabolic process"/>
    <property type="evidence" value="ECO:0000315"/>
    <property type="project" value="UniProtKB"/>
</dbReference>
<dbReference type="GO" id="GO:0000122">
    <property type="term" value="P:negative regulation of transcription by RNA polymerase II"/>
    <property type="evidence" value="ECO:0000314"/>
    <property type="project" value="UniProtKB"/>
</dbReference>
<dbReference type="GO" id="GO:0050821">
    <property type="term" value="P:protein stabilization"/>
    <property type="evidence" value="ECO:0000270"/>
    <property type="project" value="UniProtKB"/>
</dbReference>
<dbReference type="GO" id="GO:0016567">
    <property type="term" value="P:protein ubiquitination"/>
    <property type="evidence" value="ECO:0000318"/>
    <property type="project" value="GO_Central"/>
</dbReference>
<dbReference type="GO" id="GO:0065003">
    <property type="term" value="P:protein-containing complex assembly"/>
    <property type="evidence" value="ECO:0000314"/>
    <property type="project" value="UniProtKB"/>
</dbReference>
<dbReference type="GO" id="GO:0051726">
    <property type="term" value="P:regulation of cell cycle"/>
    <property type="evidence" value="ECO:0007669"/>
    <property type="project" value="InterPro"/>
</dbReference>
<dbReference type="GO" id="GO:0003281">
    <property type="term" value="P:ventricular septum development"/>
    <property type="evidence" value="ECO:0000250"/>
    <property type="project" value="BHF-UCL"/>
</dbReference>
<dbReference type="CDD" id="cd17673">
    <property type="entry name" value="MDM4"/>
    <property type="match status" value="1"/>
</dbReference>
<dbReference type="CDD" id="cd16784">
    <property type="entry name" value="mRING-HC-C2H2C4_MDM4"/>
    <property type="match status" value="1"/>
</dbReference>
<dbReference type="FunFam" id="1.10.245.10:FF:000002">
    <property type="entry name" value="E3 ubiquitin-protein ligase Mdm2"/>
    <property type="match status" value="1"/>
</dbReference>
<dbReference type="FunFam" id="2.30.30.380:FF:000010">
    <property type="entry name" value="MDM4 isoform 3"/>
    <property type="match status" value="1"/>
</dbReference>
<dbReference type="FunFam" id="3.30.40.10:FF:000176">
    <property type="entry name" value="MDM4 isoform 3"/>
    <property type="match status" value="1"/>
</dbReference>
<dbReference type="Gene3D" id="1.10.245.10">
    <property type="entry name" value="SWIB/MDM2 domain"/>
    <property type="match status" value="1"/>
</dbReference>
<dbReference type="Gene3D" id="3.30.40.10">
    <property type="entry name" value="Zinc/RING finger domain, C3HC4 (zinc finger)"/>
    <property type="match status" value="1"/>
</dbReference>
<dbReference type="Gene3D" id="2.30.30.380">
    <property type="entry name" value="Zn-finger domain of Sec23/24"/>
    <property type="match status" value="1"/>
</dbReference>
<dbReference type="IDEAL" id="IID00005"/>
<dbReference type="InterPro" id="IPR051652">
    <property type="entry name" value="MDM2_MDM4_MUL1"/>
</dbReference>
<dbReference type="InterPro" id="IPR015458">
    <property type="entry name" value="MDM4"/>
</dbReference>
<dbReference type="InterPro" id="IPR016495">
    <property type="entry name" value="p53_neg-reg_MDM_2/4"/>
</dbReference>
<dbReference type="InterPro" id="IPR036885">
    <property type="entry name" value="SWIB_MDM2_dom_sf"/>
</dbReference>
<dbReference type="InterPro" id="IPR003121">
    <property type="entry name" value="SWIB_MDM2_domain"/>
</dbReference>
<dbReference type="InterPro" id="IPR001876">
    <property type="entry name" value="Znf_RanBP2"/>
</dbReference>
<dbReference type="InterPro" id="IPR036443">
    <property type="entry name" value="Znf_RanBP2_sf"/>
</dbReference>
<dbReference type="InterPro" id="IPR001841">
    <property type="entry name" value="Znf_RING"/>
</dbReference>
<dbReference type="InterPro" id="IPR013083">
    <property type="entry name" value="Znf_RING/FYVE/PHD"/>
</dbReference>
<dbReference type="PANTHER" id="PTHR12183">
    <property type="entry name" value="MITOCHONDRIAL UBIQUITIN LIGASE ACTIVATOR OF NFKB 1"/>
    <property type="match status" value="1"/>
</dbReference>
<dbReference type="PANTHER" id="PTHR12183:SF37">
    <property type="entry name" value="PROTEIN MDM4"/>
    <property type="match status" value="1"/>
</dbReference>
<dbReference type="Pfam" id="PF13920">
    <property type="entry name" value="zf-C3HC4_3"/>
    <property type="match status" value="1"/>
</dbReference>
<dbReference type="Pfam" id="PF00641">
    <property type="entry name" value="Zn_ribbon_RanBP"/>
    <property type="match status" value="1"/>
</dbReference>
<dbReference type="PIRSF" id="PIRSF500699">
    <property type="entry name" value="MDM4"/>
    <property type="match status" value="1"/>
</dbReference>
<dbReference type="PIRSF" id="PIRSF006748">
    <property type="entry name" value="p53_MDM_2/4"/>
    <property type="match status" value="1"/>
</dbReference>
<dbReference type="SUPFAM" id="SSF90209">
    <property type="entry name" value="Ran binding protein zinc finger-like"/>
    <property type="match status" value="1"/>
</dbReference>
<dbReference type="SUPFAM" id="SSF47592">
    <property type="entry name" value="SWIB/MDM2 domain"/>
    <property type="match status" value="1"/>
</dbReference>
<dbReference type="PROSITE" id="PS51925">
    <property type="entry name" value="SWIB_MDM2"/>
    <property type="match status" value="1"/>
</dbReference>
<dbReference type="PROSITE" id="PS01358">
    <property type="entry name" value="ZF_RANBP2_1"/>
    <property type="match status" value="1"/>
</dbReference>
<dbReference type="PROSITE" id="PS50199">
    <property type="entry name" value="ZF_RANBP2_2"/>
    <property type="match status" value="1"/>
</dbReference>
<dbReference type="PROSITE" id="PS50089">
    <property type="entry name" value="ZF_RING_2"/>
    <property type="match status" value="1"/>
</dbReference>
<name>MDM4_HUMAN</name>
<protein>
    <recommendedName>
        <fullName>Protein Mdm4</fullName>
    </recommendedName>
    <alternativeName>
        <fullName>Double minute 4 protein</fullName>
    </alternativeName>
    <alternativeName>
        <fullName>Mdm2-like p53-binding protein</fullName>
    </alternativeName>
    <alternativeName>
        <fullName>Protein Mdmx</fullName>
    </alternativeName>
    <alternativeName>
        <fullName>p53-binding protein Mdm4</fullName>
    </alternativeName>
</protein>
<reference key="1">
    <citation type="journal article" date="1997" name="Genomics">
        <title>Isolation and identification of the human homolog of a new p53-binding protein, Mdmx.</title>
        <authorList>
            <person name="Shvarts A."/>
            <person name="Bazuine M."/>
            <person name="Dekker P."/>
            <person name="Ramos Y.F.M."/>
            <person name="Steegenga W.T."/>
            <person name="Merckx G."/>
            <person name="van Ham R.C.A."/>
            <person name="van der Houven van Oordt W."/>
            <person name="van der Eb A.J."/>
            <person name="Jochemsen A.G."/>
        </authorList>
    </citation>
    <scope>NUCLEOTIDE SEQUENCE [MRNA] (ISOFORM 1)</scope>
    <source>
        <tissue>Colon tumor</tissue>
    </source>
</reference>
<reference key="2">
    <citation type="journal article" date="2005" name="Cancer Res.">
        <title>Identification of an aberrantly spliced form of HDMX in human tumors: a new mechanism for HDM2 stabilization.</title>
        <authorList>
            <person name="Giglio S."/>
            <person name="Mancini F."/>
            <person name="Gentiletti F."/>
            <person name="Sparaco G."/>
            <person name="Felicioni L."/>
            <person name="Barassi F."/>
            <person name="Martella C."/>
            <person name="Prodosmo A."/>
            <person name="Iacovelli S."/>
            <person name="Buttitta F."/>
            <person name="Farsetti A."/>
            <person name="Soddu S."/>
            <person name="Marchetti A."/>
            <person name="Sacchi A."/>
            <person name="Pontecorvi A."/>
            <person name="Moretti F."/>
        </authorList>
    </citation>
    <scope>NUCLEOTIDE SEQUENCE [MRNA] (ISOFORM HDMX211)</scope>
</reference>
<reference key="3">
    <citation type="submission" date="2005-04" db="EMBL/GenBank/DDBJ databases">
        <authorList>
            <person name="Suzuki Y."/>
            <person name="Sugano S."/>
            <person name="Totoki Y."/>
            <person name="Toyoda A."/>
            <person name="Takeda T."/>
            <person name="Sakaki Y."/>
            <person name="Tanaka A."/>
            <person name="Yokoyama S."/>
        </authorList>
    </citation>
    <scope>NUCLEOTIDE SEQUENCE [LARGE SCALE MRNA] (ISOFORM 1)</scope>
    <source>
        <tissue>Gastric mucosa</tissue>
    </source>
</reference>
<reference key="4">
    <citation type="submission" date="2002-12" db="EMBL/GenBank/DDBJ databases">
        <authorList>
            <consortium name="NIEHS SNPs program"/>
        </authorList>
    </citation>
    <scope>NUCLEOTIDE SEQUENCE [GENOMIC DNA]</scope>
    <scope>VARIANTS THR-175 AND ILE-406</scope>
</reference>
<reference key="5">
    <citation type="journal article" date="2006" name="Nature">
        <title>The DNA sequence and biological annotation of human chromosome 1.</title>
        <authorList>
            <person name="Gregory S.G."/>
            <person name="Barlow K.F."/>
            <person name="McLay K.E."/>
            <person name="Kaul R."/>
            <person name="Swarbreck D."/>
            <person name="Dunham A."/>
            <person name="Scott C.E."/>
            <person name="Howe K.L."/>
            <person name="Woodfine K."/>
            <person name="Spencer C.C.A."/>
            <person name="Jones M.C."/>
            <person name="Gillson C."/>
            <person name="Searle S."/>
            <person name="Zhou Y."/>
            <person name="Kokocinski F."/>
            <person name="McDonald L."/>
            <person name="Evans R."/>
            <person name="Phillips K."/>
            <person name="Atkinson A."/>
            <person name="Cooper R."/>
            <person name="Jones C."/>
            <person name="Hall R.E."/>
            <person name="Andrews T.D."/>
            <person name="Lloyd C."/>
            <person name="Ainscough R."/>
            <person name="Almeida J.P."/>
            <person name="Ambrose K.D."/>
            <person name="Anderson F."/>
            <person name="Andrew R.W."/>
            <person name="Ashwell R.I.S."/>
            <person name="Aubin K."/>
            <person name="Babbage A.K."/>
            <person name="Bagguley C.L."/>
            <person name="Bailey J."/>
            <person name="Beasley H."/>
            <person name="Bethel G."/>
            <person name="Bird C.P."/>
            <person name="Bray-Allen S."/>
            <person name="Brown J.Y."/>
            <person name="Brown A.J."/>
            <person name="Buckley D."/>
            <person name="Burton J."/>
            <person name="Bye J."/>
            <person name="Carder C."/>
            <person name="Chapman J.C."/>
            <person name="Clark S.Y."/>
            <person name="Clarke G."/>
            <person name="Clee C."/>
            <person name="Cobley V."/>
            <person name="Collier R.E."/>
            <person name="Corby N."/>
            <person name="Coville G.J."/>
            <person name="Davies J."/>
            <person name="Deadman R."/>
            <person name="Dunn M."/>
            <person name="Earthrowl M."/>
            <person name="Ellington A.G."/>
            <person name="Errington H."/>
            <person name="Frankish A."/>
            <person name="Frankland J."/>
            <person name="French L."/>
            <person name="Garner P."/>
            <person name="Garnett J."/>
            <person name="Gay L."/>
            <person name="Ghori M.R.J."/>
            <person name="Gibson R."/>
            <person name="Gilby L.M."/>
            <person name="Gillett W."/>
            <person name="Glithero R.J."/>
            <person name="Grafham D.V."/>
            <person name="Griffiths C."/>
            <person name="Griffiths-Jones S."/>
            <person name="Grocock R."/>
            <person name="Hammond S."/>
            <person name="Harrison E.S.I."/>
            <person name="Hart E."/>
            <person name="Haugen E."/>
            <person name="Heath P.D."/>
            <person name="Holmes S."/>
            <person name="Holt K."/>
            <person name="Howden P.J."/>
            <person name="Hunt A.R."/>
            <person name="Hunt S.E."/>
            <person name="Hunter G."/>
            <person name="Isherwood J."/>
            <person name="James R."/>
            <person name="Johnson C."/>
            <person name="Johnson D."/>
            <person name="Joy A."/>
            <person name="Kay M."/>
            <person name="Kershaw J.K."/>
            <person name="Kibukawa M."/>
            <person name="Kimberley A.M."/>
            <person name="King A."/>
            <person name="Knights A.J."/>
            <person name="Lad H."/>
            <person name="Laird G."/>
            <person name="Lawlor S."/>
            <person name="Leongamornlert D.A."/>
            <person name="Lloyd D.M."/>
            <person name="Loveland J."/>
            <person name="Lovell J."/>
            <person name="Lush M.J."/>
            <person name="Lyne R."/>
            <person name="Martin S."/>
            <person name="Mashreghi-Mohammadi M."/>
            <person name="Matthews L."/>
            <person name="Matthews N.S.W."/>
            <person name="McLaren S."/>
            <person name="Milne S."/>
            <person name="Mistry S."/>
            <person name="Moore M.J.F."/>
            <person name="Nickerson T."/>
            <person name="O'Dell C.N."/>
            <person name="Oliver K."/>
            <person name="Palmeiri A."/>
            <person name="Palmer S.A."/>
            <person name="Parker A."/>
            <person name="Patel D."/>
            <person name="Pearce A.V."/>
            <person name="Peck A.I."/>
            <person name="Pelan S."/>
            <person name="Phelps K."/>
            <person name="Phillimore B.J."/>
            <person name="Plumb R."/>
            <person name="Rajan J."/>
            <person name="Raymond C."/>
            <person name="Rouse G."/>
            <person name="Saenphimmachak C."/>
            <person name="Sehra H.K."/>
            <person name="Sheridan E."/>
            <person name="Shownkeen R."/>
            <person name="Sims S."/>
            <person name="Skuce C.D."/>
            <person name="Smith M."/>
            <person name="Steward C."/>
            <person name="Subramanian S."/>
            <person name="Sycamore N."/>
            <person name="Tracey A."/>
            <person name="Tromans A."/>
            <person name="Van Helmond Z."/>
            <person name="Wall M."/>
            <person name="Wallis J.M."/>
            <person name="White S."/>
            <person name="Whitehead S.L."/>
            <person name="Wilkinson J.E."/>
            <person name="Willey D.L."/>
            <person name="Williams H."/>
            <person name="Wilming L."/>
            <person name="Wray P.W."/>
            <person name="Wu Z."/>
            <person name="Coulson A."/>
            <person name="Vaudin M."/>
            <person name="Sulston J.E."/>
            <person name="Durbin R.M."/>
            <person name="Hubbard T."/>
            <person name="Wooster R."/>
            <person name="Dunham I."/>
            <person name="Carter N.P."/>
            <person name="McVean G."/>
            <person name="Ross M.T."/>
            <person name="Harrow J."/>
            <person name="Olson M.V."/>
            <person name="Beck S."/>
            <person name="Rogers J."/>
            <person name="Bentley D.R."/>
        </authorList>
    </citation>
    <scope>NUCLEOTIDE SEQUENCE [LARGE SCALE GENOMIC DNA]</scope>
</reference>
<reference key="6">
    <citation type="journal article" date="2004" name="Genome Res.">
        <title>The status, quality, and expansion of the NIH full-length cDNA project: the Mammalian Gene Collection (MGC).</title>
        <authorList>
            <consortium name="The MGC Project Team"/>
        </authorList>
    </citation>
    <scope>NUCLEOTIDE SEQUENCE [LARGE SCALE MRNA] (ISOFORMS 1 AND 5)</scope>
    <source>
        <tissue>Brain</tissue>
        <tissue>Testis</tissue>
    </source>
</reference>
<reference key="7">
    <citation type="journal article" date="2003" name="J. Cell. Biochem.">
        <title>Identification of a domain within MDMX-S that is responsible for its high affinity interaction with p53 and high-level expression in mammalian cells.</title>
        <authorList>
            <person name="Rallapalli R."/>
            <person name="Strachan G."/>
            <person name="Tuan R.S."/>
            <person name="Hall D.J."/>
        </authorList>
    </citation>
    <scope>ALTERNATIVE SPLICING (ISOFORMS 2 AND 3)</scope>
</reference>
<reference key="8">
    <citation type="journal article" date="1999" name="J. Biol. Chem.">
        <title>Stabilization of the MDM2 oncoprotein by interaction with the structurally related MDMX protein.</title>
        <authorList>
            <person name="Sharp D.A."/>
            <person name="Kratowicz S.A."/>
            <person name="Sank M.J."/>
            <person name="George D.L."/>
        </authorList>
    </citation>
    <scope>MUTAGENESIS OF CYS-437</scope>
</reference>
<reference key="9">
    <citation type="journal article" date="2005" name="EMBO J.">
        <title>ATM and Chk2-dependent phosphorylation of MDMX contribute to p53 activation after DNA damage.</title>
        <authorList>
            <person name="Chen L."/>
            <person name="Gilkes D.M."/>
            <person name="Pan Y."/>
            <person name="Lane W.S."/>
            <person name="Chen J."/>
        </authorList>
    </citation>
    <scope>FUNCTION IN TP53 ACTIVATION</scope>
    <scope>PHOSPHORYLATION AT SER-342 AND SER-367 BY CHEK2</scope>
    <scope>UBIQUITINATION</scope>
    <scope>INTERACTION WITH MDM2</scope>
</reference>
<reference key="10">
    <citation type="journal article" date="2006" name="EMBO J.">
        <title>14-3-3gamma binds to MDMX that is phosphorylated by UV-activated Chk1, resulting in p53 activation.</title>
        <authorList>
            <person name="Jin Y."/>
            <person name="Dai M.S."/>
            <person name="Lu S.Z."/>
            <person name="Xu Y."/>
            <person name="Luo Z."/>
            <person name="Zhao Y."/>
            <person name="Lu H."/>
        </authorList>
    </citation>
    <scope>FUNCTION IN TP53 ACTIVATION</scope>
    <scope>PHOSPHORYLATION AT SER-367 BY CHEK1</scope>
    <scope>INTERACTION WITH YWHAG</scope>
</reference>
<reference key="11">
    <citation type="journal article" date="2010" name="Oncogene">
        <title>MdmX is a substrate for the deubiquitinating enzyme USP2a.</title>
        <authorList>
            <person name="Allende-Vega N."/>
            <person name="Sparks A."/>
            <person name="Lane D.P."/>
            <person name="Saville M.K."/>
        </authorList>
    </citation>
    <scope>INTERACTION WITH USP2 AND MDM2</scope>
    <scope>INDUCTION</scope>
    <scope>UBIQUITINATION</scope>
    <scope>DEUBIQUITINATION BY USP2</scope>
</reference>
<reference key="12">
    <citation type="journal article" date="2002" name="Proteomics">
        <title>Cluster analysis of an extensive human breast cancer cell line protein expression map database.</title>
        <authorList>
            <person name="Harris R.A."/>
            <person name="Yang A."/>
            <person name="Stein R.C."/>
            <person name="Lucy K."/>
            <person name="Brusten L."/>
            <person name="Herath A."/>
            <person name="Parekh R."/>
            <person name="Waterfield M.D."/>
            <person name="O'Hare M.J."/>
            <person name="Neville M.A."/>
            <person name="Page M.J."/>
            <person name="Zvelebil M.J."/>
        </authorList>
    </citation>
    <scope>MASS SPECTROMETRY</scope>
    <source>
        <tissue>Mammary cancer</tissue>
    </source>
</reference>
<reference key="13">
    <citation type="journal article" date="2013" name="J. Proteome Res.">
        <title>Toward a comprehensive characterization of a human cancer cell phosphoproteome.</title>
        <authorList>
            <person name="Zhou H."/>
            <person name="Di Palma S."/>
            <person name="Preisinger C."/>
            <person name="Peng M."/>
            <person name="Polat A.N."/>
            <person name="Heck A.J."/>
            <person name="Mohammed S."/>
        </authorList>
    </citation>
    <scope>PHOSPHORYLATION [LARGE SCALE ANALYSIS] AT SER-342 AND SER-367</scope>
    <scope>IDENTIFICATION BY MASS SPECTROMETRY [LARGE SCALE ANALYSIS]</scope>
    <source>
        <tissue>Erythroleukemia</tissue>
    </source>
</reference>
<reference key="14">
    <citation type="submission" date="2005-11" db="PDB data bank">
        <title>Solution structure of the ZF-RANBP domain of p53-binding protein MDM4.</title>
        <authorList>
            <consortium name="RIKEN structural genomics initiative (RSGI)"/>
        </authorList>
    </citation>
    <scope>STRUCTURE BY NMR OF 300-340</scope>
</reference>
<reference key="15">
    <citation type="journal article" date="2020" name="Sci. Adv.">
        <title>Germline mutation of MDM4, a major p53 regulator, in a familial syndrome of defective telomere maintenance.</title>
        <authorList>
            <person name="Toufektchan E."/>
            <person name="Lejour V."/>
            <person name="Durand R."/>
            <person name="Giri N."/>
            <person name="Draskovic I."/>
            <person name="Bardot B."/>
            <person name="Laplante P."/>
            <person name="Jaber S."/>
            <person name="Alter B.P."/>
            <person name="Londono-Vallejo J.A."/>
            <person name="Savage S.A."/>
            <person name="Toledo F."/>
        </authorList>
    </citation>
    <scope>INVOLVEMENT IN BMFS6</scope>
    <scope>VARIANT BMFS6 MET-454</scope>
    <scope>CHARACTERIZATION OF VARIANT BMFS6 MET-454</scope>
    <scope>FUNCTION</scope>
    <scope>INTERACTION WITH MDM2</scope>
</reference>